<evidence type="ECO:0000250" key="1"/>
<evidence type="ECO:0000250" key="2">
    <source>
        <dbReference type="UniProtKB" id="P04049"/>
    </source>
</evidence>
<evidence type="ECO:0000255" key="3">
    <source>
        <dbReference type="PROSITE-ProRule" id="PRU00159"/>
    </source>
</evidence>
<evidence type="ECO:0000255" key="4">
    <source>
        <dbReference type="PROSITE-ProRule" id="PRU00226"/>
    </source>
</evidence>
<evidence type="ECO:0000255" key="5">
    <source>
        <dbReference type="PROSITE-ProRule" id="PRU00262"/>
    </source>
</evidence>
<evidence type="ECO:0000255" key="6">
    <source>
        <dbReference type="PROSITE-ProRule" id="PRU10027"/>
    </source>
</evidence>
<evidence type="ECO:0000256" key="7">
    <source>
        <dbReference type="SAM" id="MobiDB-lite"/>
    </source>
</evidence>
<evidence type="ECO:0000305" key="8"/>
<accession>P09560</accession>
<accession>Q91390</accession>
<feature type="chain" id="PRO_0000086600" description="RAF proto-oncogene serine/threonine-protein kinase">
    <location>
        <begin position="1"/>
        <end position="638"/>
    </location>
</feature>
<feature type="domain" description="RBD" evidence="5">
    <location>
        <begin position="56"/>
        <end position="130"/>
    </location>
</feature>
<feature type="domain" description="Protein kinase" evidence="3">
    <location>
        <begin position="340"/>
        <end position="600"/>
    </location>
</feature>
<feature type="zinc finger region" description="Phorbol-ester/DAG-type" evidence="4">
    <location>
        <begin position="137"/>
        <end position="183"/>
    </location>
</feature>
<feature type="region of interest" description="Disordered" evidence="7">
    <location>
        <begin position="279"/>
        <end position="323"/>
    </location>
</feature>
<feature type="compositionally biased region" description="Polar residues" evidence="7">
    <location>
        <begin position="284"/>
        <end position="297"/>
    </location>
</feature>
<feature type="active site" description="Proton acceptor" evidence="3 6">
    <location>
        <position position="459"/>
    </location>
</feature>
<feature type="binding site" evidence="1">
    <location>
        <position position="138"/>
    </location>
    <ligand>
        <name>Zn(2+)</name>
        <dbReference type="ChEBI" id="CHEBI:29105"/>
        <label>1</label>
    </ligand>
</feature>
<feature type="binding site" evidence="1">
    <location>
        <position position="151"/>
    </location>
    <ligand>
        <name>Zn(2+)</name>
        <dbReference type="ChEBI" id="CHEBI:29105"/>
        <label>2</label>
    </ligand>
</feature>
<feature type="binding site" evidence="1">
    <location>
        <position position="154"/>
    </location>
    <ligand>
        <name>Zn(2+)</name>
        <dbReference type="ChEBI" id="CHEBI:29105"/>
        <label>2</label>
    </ligand>
</feature>
<feature type="binding site" evidence="1">
    <location>
        <position position="164"/>
    </location>
    <ligand>
        <name>Zn(2+)</name>
        <dbReference type="ChEBI" id="CHEBI:29105"/>
        <label>1</label>
    </ligand>
</feature>
<feature type="binding site" evidence="1">
    <location>
        <position position="167"/>
    </location>
    <ligand>
        <name>Zn(2+)</name>
        <dbReference type="ChEBI" id="CHEBI:29105"/>
        <label>1</label>
    </ligand>
</feature>
<feature type="binding site" evidence="1">
    <location>
        <position position="172"/>
    </location>
    <ligand>
        <name>Zn(2+)</name>
        <dbReference type="ChEBI" id="CHEBI:29105"/>
        <label>2</label>
    </ligand>
</feature>
<feature type="binding site" evidence="1">
    <location>
        <position position="175"/>
    </location>
    <ligand>
        <name>Zn(2+)</name>
        <dbReference type="ChEBI" id="CHEBI:29105"/>
        <label>2</label>
    </ligand>
</feature>
<feature type="binding site" evidence="1">
    <location>
        <position position="183"/>
    </location>
    <ligand>
        <name>Zn(2+)</name>
        <dbReference type="ChEBI" id="CHEBI:29105"/>
        <label>1</label>
    </ligand>
</feature>
<feature type="binding site" evidence="3">
    <location>
        <begin position="346"/>
        <end position="354"/>
    </location>
    <ligand>
        <name>ATP</name>
        <dbReference type="ChEBI" id="CHEBI:30616"/>
    </ligand>
</feature>
<feature type="binding site" evidence="3">
    <location>
        <position position="366"/>
    </location>
    <ligand>
        <name>ATP</name>
        <dbReference type="ChEBI" id="CHEBI:30616"/>
    </ligand>
</feature>
<feature type="modified residue" description="Phosphoserine" evidence="1">
    <location>
        <position position="43"/>
    </location>
</feature>
<feature type="modified residue" description="Phosphoserine" evidence="1">
    <location>
        <position position="257"/>
    </location>
</feature>
<feature type="modified residue" description="Phosphothreonine; by autocatalysis" evidence="1">
    <location>
        <position position="266"/>
    </location>
</feature>
<feature type="modified residue" description="Phosphoserine" evidence="1">
    <location>
        <position position="329"/>
    </location>
</feature>
<feature type="modified residue" description="Phosphoserine" evidence="1">
    <location>
        <position position="490"/>
    </location>
</feature>
<feature type="sequence conflict" description="In Ref. 2; AAB20707." evidence="8" ref="2">
    <original>K</original>
    <variation>R</variation>
    <location>
        <position position="309"/>
    </location>
</feature>
<dbReference type="EC" id="2.7.11.1" evidence="2"/>
<dbReference type="EMBL" id="X12948">
    <property type="protein sequence ID" value="CAA31407.1"/>
    <property type="molecule type" value="mRNA"/>
</dbReference>
<dbReference type="EMBL" id="S74063">
    <property type="protein sequence ID" value="AAB20707.1"/>
    <property type="molecule type" value="mRNA"/>
</dbReference>
<dbReference type="PIR" id="S01930">
    <property type="entry name" value="TVXLRF"/>
</dbReference>
<dbReference type="SMR" id="P09560"/>
<dbReference type="DIP" id="DIP-1075N"/>
<dbReference type="AGR" id="Xenbase:XB-GENE-6053397"/>
<dbReference type="Xenbase" id="XB-GENE-6053397">
    <property type="gene designation" value="raf1.S"/>
</dbReference>
<dbReference type="BRENDA" id="2.7.10.2">
    <property type="organism ID" value="6725"/>
</dbReference>
<dbReference type="Proteomes" id="UP000186698">
    <property type="component" value="Unplaced"/>
</dbReference>
<dbReference type="GO" id="GO:0005737">
    <property type="term" value="C:cytoplasm"/>
    <property type="evidence" value="ECO:0000250"/>
    <property type="project" value="UniProtKB"/>
</dbReference>
<dbReference type="GO" id="GO:0005829">
    <property type="term" value="C:cytosol"/>
    <property type="evidence" value="ECO:0000318"/>
    <property type="project" value="GO_Central"/>
</dbReference>
<dbReference type="GO" id="GO:0005739">
    <property type="term" value="C:mitochondrion"/>
    <property type="evidence" value="ECO:0000318"/>
    <property type="project" value="GO_Central"/>
</dbReference>
<dbReference type="GO" id="GO:0005886">
    <property type="term" value="C:plasma membrane"/>
    <property type="evidence" value="ECO:0000250"/>
    <property type="project" value="UniProtKB"/>
</dbReference>
<dbReference type="GO" id="GO:0005524">
    <property type="term" value="F:ATP binding"/>
    <property type="evidence" value="ECO:0007669"/>
    <property type="project" value="UniProtKB-KW"/>
</dbReference>
<dbReference type="GO" id="GO:0004709">
    <property type="term" value="F:MAP kinase kinase kinase activity"/>
    <property type="evidence" value="ECO:0000318"/>
    <property type="project" value="GO_Central"/>
</dbReference>
<dbReference type="GO" id="GO:0106310">
    <property type="term" value="F:protein serine kinase activity"/>
    <property type="evidence" value="ECO:0007669"/>
    <property type="project" value="RHEA"/>
</dbReference>
<dbReference type="GO" id="GO:0008270">
    <property type="term" value="F:zinc ion binding"/>
    <property type="evidence" value="ECO:0007669"/>
    <property type="project" value="UniProtKB-KW"/>
</dbReference>
<dbReference type="GO" id="GO:0000165">
    <property type="term" value="P:MAPK cascade"/>
    <property type="evidence" value="ECO:0000318"/>
    <property type="project" value="GO_Central"/>
</dbReference>
<dbReference type="CDD" id="cd20870">
    <property type="entry name" value="C1_A_C-Raf"/>
    <property type="match status" value="1"/>
</dbReference>
<dbReference type="CDD" id="cd17135">
    <property type="entry name" value="RBD_CRAF"/>
    <property type="match status" value="1"/>
</dbReference>
<dbReference type="CDD" id="cd14149">
    <property type="entry name" value="STKc_C-Raf"/>
    <property type="match status" value="1"/>
</dbReference>
<dbReference type="FunFam" id="3.10.20.90:FF:000015">
    <property type="entry name" value="B-Raf proto-oncogene serine/threonine-protein kinase"/>
    <property type="match status" value="1"/>
</dbReference>
<dbReference type="FunFam" id="3.30.200.20:FF:000024">
    <property type="entry name" value="B-Raf proto-oncogene serine/threonine-protein kinase"/>
    <property type="match status" value="1"/>
</dbReference>
<dbReference type="FunFam" id="3.30.60.20:FF:000004">
    <property type="entry name" value="B-Raf proto-oncogene serine/threonine-protein kinase"/>
    <property type="match status" value="1"/>
</dbReference>
<dbReference type="FunFam" id="1.10.510.10:FF:000036">
    <property type="entry name" value="RAF proto-oncogene serine/threonine-protein kinase"/>
    <property type="match status" value="1"/>
</dbReference>
<dbReference type="Gene3D" id="3.30.60.20">
    <property type="match status" value="1"/>
</dbReference>
<dbReference type="Gene3D" id="3.10.20.90">
    <property type="entry name" value="Phosphatidylinositol 3-kinase Catalytic Subunit, Chain A, domain 1"/>
    <property type="match status" value="1"/>
</dbReference>
<dbReference type="Gene3D" id="3.30.200.20">
    <property type="entry name" value="Phosphorylase Kinase, domain 1"/>
    <property type="match status" value="1"/>
</dbReference>
<dbReference type="Gene3D" id="1.10.510.10">
    <property type="entry name" value="Transferase(Phosphotransferase) domain 1"/>
    <property type="match status" value="1"/>
</dbReference>
<dbReference type="InterPro" id="IPR046349">
    <property type="entry name" value="C1-like_sf"/>
</dbReference>
<dbReference type="InterPro" id="IPR011009">
    <property type="entry name" value="Kinase-like_dom_sf"/>
</dbReference>
<dbReference type="InterPro" id="IPR002219">
    <property type="entry name" value="PE/DAG-bd"/>
</dbReference>
<dbReference type="InterPro" id="IPR000719">
    <property type="entry name" value="Prot_kinase_dom"/>
</dbReference>
<dbReference type="InterPro" id="IPR017441">
    <property type="entry name" value="Protein_kinase_ATP_BS"/>
</dbReference>
<dbReference type="InterPro" id="IPR003116">
    <property type="entry name" value="RBD_dom"/>
</dbReference>
<dbReference type="InterPro" id="IPR001245">
    <property type="entry name" value="Ser-Thr/Tyr_kinase_cat_dom"/>
</dbReference>
<dbReference type="InterPro" id="IPR008271">
    <property type="entry name" value="Ser/Thr_kinase_AS"/>
</dbReference>
<dbReference type="InterPro" id="IPR051681">
    <property type="entry name" value="Ser/Thr_Kinases-Pseudokinases"/>
</dbReference>
<dbReference type="InterPro" id="IPR029071">
    <property type="entry name" value="Ubiquitin-like_domsf"/>
</dbReference>
<dbReference type="PANTHER" id="PTHR44329:SF22">
    <property type="entry name" value="RAF PROTO-ONCOGENE SERINE_THREONINE-PROTEIN KINASE"/>
    <property type="match status" value="1"/>
</dbReference>
<dbReference type="PANTHER" id="PTHR44329">
    <property type="entry name" value="SERINE/THREONINE-PROTEIN KINASE TNNI3K-RELATED"/>
    <property type="match status" value="1"/>
</dbReference>
<dbReference type="Pfam" id="PF00130">
    <property type="entry name" value="C1_1"/>
    <property type="match status" value="1"/>
</dbReference>
<dbReference type="Pfam" id="PF07714">
    <property type="entry name" value="PK_Tyr_Ser-Thr"/>
    <property type="match status" value="1"/>
</dbReference>
<dbReference type="Pfam" id="PF02196">
    <property type="entry name" value="RBD"/>
    <property type="match status" value="1"/>
</dbReference>
<dbReference type="SMART" id="SM00109">
    <property type="entry name" value="C1"/>
    <property type="match status" value="1"/>
</dbReference>
<dbReference type="SMART" id="SM00455">
    <property type="entry name" value="RBD"/>
    <property type="match status" value="1"/>
</dbReference>
<dbReference type="SMART" id="SM00220">
    <property type="entry name" value="S_TKc"/>
    <property type="match status" value="1"/>
</dbReference>
<dbReference type="SUPFAM" id="SSF57889">
    <property type="entry name" value="Cysteine-rich domain"/>
    <property type="match status" value="1"/>
</dbReference>
<dbReference type="SUPFAM" id="SSF56112">
    <property type="entry name" value="Protein kinase-like (PK-like)"/>
    <property type="match status" value="1"/>
</dbReference>
<dbReference type="SUPFAM" id="SSF54236">
    <property type="entry name" value="Ubiquitin-like"/>
    <property type="match status" value="1"/>
</dbReference>
<dbReference type="PROSITE" id="PS00107">
    <property type="entry name" value="PROTEIN_KINASE_ATP"/>
    <property type="match status" value="1"/>
</dbReference>
<dbReference type="PROSITE" id="PS50011">
    <property type="entry name" value="PROTEIN_KINASE_DOM"/>
    <property type="match status" value="1"/>
</dbReference>
<dbReference type="PROSITE" id="PS00108">
    <property type="entry name" value="PROTEIN_KINASE_ST"/>
    <property type="match status" value="1"/>
</dbReference>
<dbReference type="PROSITE" id="PS50898">
    <property type="entry name" value="RBD"/>
    <property type="match status" value="1"/>
</dbReference>
<dbReference type="PROSITE" id="PS00479">
    <property type="entry name" value="ZF_DAG_PE_1"/>
    <property type="match status" value="1"/>
</dbReference>
<dbReference type="PROSITE" id="PS50081">
    <property type="entry name" value="ZF_DAG_PE_2"/>
    <property type="match status" value="1"/>
</dbReference>
<proteinExistence type="evidence at transcript level"/>
<sequence length="638" mass="71960">MEHIQGAWKTLSNGFGFKESVFEGSSCMSPTIVHQFGYQRRASDDGKLSDTSKTSSTMRVYLPNKQRTVVNVRSGMSLHDCLMKSLKVRGLQPECCAVFRLIQDPKGKLRLDWNTDAMSLVGAELQVDFLDHVPLTTHNFVRKTFLKLAFCDICQKFLLNAFRCQTCGYKFHEHCSTKVPTMCVDWSNIRQLLLFPNPNNIEGGSHTLPSLTMRRIGESVRIPVSSQQRYSTPHPFSFSTPSPVSECSLSQRQRSTSTPNVHMVSTTMAVDSRVIEDALRSHSESGSPNNLSPTGWSNAKAPAPTHREKAASSTGQEKNKIRARGQRDSSYYWEIIASEVMLSSRIGSGSFGTVYKGKWHGDVAVKILKVTDPTPEQLQAFRNEVAVLRKTRHVNILLFMGYMTKDNLAIVTQWCEGSSLYYHLHVLDTKFQMFQLIDIARQTAQGMDYLHAKNIIHRDMKSNNIFLHEGLTVKIGDFGLATVKTRWSGSQQVEQLTGSILWMAPEVIRMQDNNPFSFQSDVYSYGIVLYELMTGELPYSHIRDRDQIIFLVGRGGVVPDLSKLYKNCPKAMKRLVADSIKKLRDERPLFPQILSSIELLQHSLPKINRSALEPSLHRAAHTEDISSCALTSTRLPVF</sequence>
<gene>
    <name type="primary">raf1</name>
    <name type="synonym">raf</name>
</gene>
<protein>
    <recommendedName>
        <fullName>RAF proto-oncogene serine/threonine-protein kinase</fullName>
        <ecNumber evidence="2">2.7.11.1</ecNumber>
    </recommendedName>
    <alternativeName>
        <fullName>C-RAF</fullName>
    </alternativeName>
</protein>
<comment type="function">
    <text evidence="2">Serine/threonine-protein kinase that acts as a regulatory link between the membrane-associated Ras GTPases and the MAPK/ERK cascade, and this critical regulatory link functions as a switch determining cell fate decisions. RAF1 activation initiates a mitogen-activated protein kinase (MAPK) cascade that comprises a sequential phosphorylation of the dual-specific MAPK kinases (MAP2K1/MEK1 and MAP2K2/MEK2) and the extracellular signal-regulated kinases (MAPK3/ERK1 and MAPK1/ERK2) (By similarity).</text>
</comment>
<comment type="catalytic activity">
    <reaction evidence="2">
        <text>L-seryl-[protein] + ATP = O-phospho-L-seryl-[protein] + ADP + H(+)</text>
        <dbReference type="Rhea" id="RHEA:17989"/>
        <dbReference type="Rhea" id="RHEA-COMP:9863"/>
        <dbReference type="Rhea" id="RHEA-COMP:11604"/>
        <dbReference type="ChEBI" id="CHEBI:15378"/>
        <dbReference type="ChEBI" id="CHEBI:29999"/>
        <dbReference type="ChEBI" id="CHEBI:30616"/>
        <dbReference type="ChEBI" id="CHEBI:83421"/>
        <dbReference type="ChEBI" id="CHEBI:456216"/>
        <dbReference type="EC" id="2.7.11.1"/>
    </reaction>
    <physiologicalReaction direction="left-to-right" evidence="2">
        <dbReference type="Rhea" id="RHEA:17990"/>
    </physiologicalReaction>
</comment>
<comment type="catalytic activity">
    <reaction evidence="2">
        <text>L-threonyl-[protein] + ATP = O-phospho-L-threonyl-[protein] + ADP + H(+)</text>
        <dbReference type="Rhea" id="RHEA:46608"/>
        <dbReference type="Rhea" id="RHEA-COMP:11060"/>
        <dbReference type="Rhea" id="RHEA-COMP:11605"/>
        <dbReference type="ChEBI" id="CHEBI:15378"/>
        <dbReference type="ChEBI" id="CHEBI:30013"/>
        <dbReference type="ChEBI" id="CHEBI:30616"/>
        <dbReference type="ChEBI" id="CHEBI:61977"/>
        <dbReference type="ChEBI" id="CHEBI:456216"/>
        <dbReference type="EC" id="2.7.11.1"/>
    </reaction>
    <physiologicalReaction direction="left-to-right" evidence="2">
        <dbReference type="Rhea" id="RHEA:46609"/>
    </physiologicalReaction>
</comment>
<comment type="cofactor">
    <cofactor evidence="1">
        <name>Zn(2+)</name>
        <dbReference type="ChEBI" id="CHEBI:29105"/>
    </cofactor>
    <text evidence="1">Binds 2 Zn(2+) ions per subunit.</text>
</comment>
<comment type="subcellular location">
    <subcellularLocation>
        <location evidence="1">Cytoplasm</location>
    </subcellularLocation>
    <subcellularLocation>
        <location evidence="1">Cell membrane</location>
    </subcellularLocation>
</comment>
<comment type="PTM">
    <text evidence="1">Phosphorylation at Ser-257 inactivates kinase activity. Dephosphorylation of Ser-257 by a complex containing protein phosphatase 1 relieves inactivation, leading to stimulate RAF1 activity (By similarity).</text>
</comment>
<comment type="similarity">
    <text evidence="8">Belongs to the protein kinase superfamily. TKL Ser/Thr protein kinase family. RAF subfamily.</text>
</comment>
<reference key="1">
    <citation type="journal article" date="1988" name="Nucleic Acids Res.">
        <title>Nucleotide sequence of Xenopus C-raf coding region.</title>
        <authorList>
            <person name="le Guellec R."/>
            <person name="le Guellec K."/>
            <person name="Paris J."/>
            <person name="Philippe M."/>
        </authorList>
    </citation>
    <scope>NUCLEOTIDE SEQUENCE [MRNA]</scope>
    <source>
        <tissue>Oocyte</tissue>
    </source>
</reference>
<reference key="2">
    <citation type="journal article" date="1991" name="Biol. Cell">
        <title>Xenopus c-raf proto-oncogene: cloning and expression during oogenesis and early development.</title>
        <authorList>
            <person name="le Guellec R."/>
            <person name="Couturier A."/>
            <person name="le Guellec K."/>
            <person name="Paris J."/>
            <person name="le Fur N."/>
            <person name="Philippe M."/>
        </authorList>
    </citation>
    <scope>NUCLEOTIDE SEQUENCE [MRNA]</scope>
</reference>
<name>RAF1_XENLA</name>
<organism>
    <name type="scientific">Xenopus laevis</name>
    <name type="common">African clawed frog</name>
    <dbReference type="NCBI Taxonomy" id="8355"/>
    <lineage>
        <taxon>Eukaryota</taxon>
        <taxon>Metazoa</taxon>
        <taxon>Chordata</taxon>
        <taxon>Craniata</taxon>
        <taxon>Vertebrata</taxon>
        <taxon>Euteleostomi</taxon>
        <taxon>Amphibia</taxon>
        <taxon>Batrachia</taxon>
        <taxon>Anura</taxon>
        <taxon>Pipoidea</taxon>
        <taxon>Pipidae</taxon>
        <taxon>Xenopodinae</taxon>
        <taxon>Xenopus</taxon>
        <taxon>Xenopus</taxon>
    </lineage>
</organism>
<keyword id="KW-0067">ATP-binding</keyword>
<keyword id="KW-1003">Cell membrane</keyword>
<keyword id="KW-0963">Cytoplasm</keyword>
<keyword id="KW-0418">Kinase</keyword>
<keyword id="KW-0472">Membrane</keyword>
<keyword id="KW-0479">Metal-binding</keyword>
<keyword id="KW-0547">Nucleotide-binding</keyword>
<keyword id="KW-0597">Phosphoprotein</keyword>
<keyword id="KW-0656">Proto-oncogene</keyword>
<keyword id="KW-1185">Reference proteome</keyword>
<keyword id="KW-0723">Serine/threonine-protein kinase</keyword>
<keyword id="KW-0808">Transferase</keyword>
<keyword id="KW-0862">Zinc</keyword>
<keyword id="KW-0863">Zinc-finger</keyword>